<proteinExistence type="inferred from homology"/>
<dbReference type="EMBL" id="L25667">
    <property type="protein sequence ID" value="AAA27680.1"/>
    <property type="molecule type" value="Genomic_DNA"/>
</dbReference>
<dbReference type="EMBL" id="BX936399">
    <property type="protein sequence ID" value="CAF25416.1"/>
    <property type="molecule type" value="Genomic_DNA"/>
</dbReference>
<dbReference type="RefSeq" id="WP_002212938.1">
    <property type="nucleotide sequence ID" value="NZ_CP009711.1"/>
</dbReference>
<dbReference type="SMR" id="P69985"/>
<dbReference type="KEGG" id="ypo:BZ17_4261"/>
<dbReference type="KEGG" id="yps:pYV0073"/>
<dbReference type="PATRIC" id="fig|273123.14.peg.4497"/>
<dbReference type="Proteomes" id="UP000001011">
    <property type="component" value="Plasmid pYV"/>
</dbReference>
<dbReference type="GO" id="GO:0005886">
    <property type="term" value="C:plasma membrane"/>
    <property type="evidence" value="ECO:0007669"/>
    <property type="project" value="UniProtKB-SubCell"/>
</dbReference>
<dbReference type="GO" id="GO:0006605">
    <property type="term" value="P:protein targeting"/>
    <property type="evidence" value="ECO:0007669"/>
    <property type="project" value="InterPro"/>
</dbReference>
<dbReference type="GO" id="GO:0015031">
    <property type="term" value="P:protein transport"/>
    <property type="evidence" value="ECO:0007669"/>
    <property type="project" value="UniProtKB-KW"/>
</dbReference>
<dbReference type="InterPro" id="IPR002010">
    <property type="entry name" value="T3SS_IM_R"/>
</dbReference>
<dbReference type="InterPro" id="IPR006304">
    <property type="entry name" value="T3SS_SpaR/YscT"/>
</dbReference>
<dbReference type="NCBIfam" id="TIGR01401">
    <property type="entry name" value="fliR_like_III"/>
    <property type="match status" value="1"/>
</dbReference>
<dbReference type="PANTHER" id="PTHR30065">
    <property type="entry name" value="FLAGELLAR BIOSYNTHETIC PROTEIN FLIR"/>
    <property type="match status" value="1"/>
</dbReference>
<dbReference type="PANTHER" id="PTHR30065:SF1">
    <property type="entry name" value="SURFACE PRESENTATION OF ANTIGENS PROTEIN SPAR"/>
    <property type="match status" value="1"/>
</dbReference>
<dbReference type="Pfam" id="PF01311">
    <property type="entry name" value="Bac_export_1"/>
    <property type="match status" value="1"/>
</dbReference>
<dbReference type="PRINTS" id="PR00953">
    <property type="entry name" value="TYPE3IMRPROT"/>
</dbReference>
<feature type="chain" id="PRO_0000192064" description="Yop proteins translocation protein T">
    <location>
        <begin position="1"/>
        <end position="261"/>
    </location>
</feature>
<feature type="transmembrane region" description="Helical" evidence="1">
    <location>
        <begin position="20"/>
        <end position="40"/>
    </location>
</feature>
<feature type="transmembrane region" description="Helical" evidence="1">
    <location>
        <begin position="44"/>
        <end position="64"/>
    </location>
</feature>
<feature type="transmembrane region" description="Helical" evidence="1">
    <location>
        <begin position="77"/>
        <end position="97"/>
    </location>
</feature>
<feature type="transmembrane region" description="Helical" evidence="1">
    <location>
        <begin position="131"/>
        <end position="151"/>
    </location>
</feature>
<feature type="transmembrane region" description="Helical" evidence="1">
    <location>
        <begin position="180"/>
        <end position="200"/>
    </location>
</feature>
<feature type="transmembrane region" description="Helical" evidence="1">
    <location>
        <begin position="214"/>
        <end position="234"/>
    </location>
</feature>
<feature type="transmembrane region" description="Helical" evidence="1">
    <location>
        <begin position="239"/>
        <end position="259"/>
    </location>
</feature>
<protein>
    <recommendedName>
        <fullName>Yop proteins translocation protein T</fullName>
    </recommendedName>
</protein>
<reference key="1">
    <citation type="journal article" date="1994" name="J. Bacteriol.">
        <title>The lcrB (yscN/U) gene cluster of Yersinia pseudotuberculosis is involved in Yop secretion and shows high homology to the spa gene clusters of Shigella flexneri and Salmonella typhimurium.</title>
        <authorList>
            <person name="Bergman T."/>
            <person name="Erickson K."/>
            <person name="Galyov E."/>
            <person name="Persson C."/>
            <person name="Wolf-Watz H."/>
        </authorList>
    </citation>
    <scope>NUCLEOTIDE SEQUENCE [GENOMIC DNA]</scope>
    <source>
        <strain>YPIII / Serotype O:3</strain>
        <plasmid>pIB1</plasmid>
    </source>
</reference>
<reference key="2">
    <citation type="journal article" date="2004" name="Proc. Natl. Acad. Sci. U.S.A.">
        <title>Insights into the evolution of Yersinia pestis through whole-genome comparison with Yersinia pseudotuberculosis.</title>
        <authorList>
            <person name="Chain P.S.G."/>
            <person name="Carniel E."/>
            <person name="Larimer F.W."/>
            <person name="Lamerdin J."/>
            <person name="Stoutland P.O."/>
            <person name="Regala W.M."/>
            <person name="Georgescu A.M."/>
            <person name="Vergez L.M."/>
            <person name="Land M.L."/>
            <person name="Motin V.L."/>
            <person name="Brubaker R.R."/>
            <person name="Fowler J."/>
            <person name="Hinnebusch J."/>
            <person name="Marceau M."/>
            <person name="Medigue C."/>
            <person name="Simonet M."/>
            <person name="Chenal-Francisque V."/>
            <person name="Souza B."/>
            <person name="Dacheux D."/>
            <person name="Elliott J.M."/>
            <person name="Derbise A."/>
            <person name="Hauser L.J."/>
            <person name="Garcia E."/>
        </authorList>
    </citation>
    <scope>NUCLEOTIDE SEQUENCE [LARGE SCALE GENOMIC DNA]</scope>
    <source>
        <strain>IP32953</strain>
        <plasmid>pYV</plasmid>
    </source>
</reference>
<geneLocation type="plasmid">
    <name>pIB1</name>
</geneLocation>
<geneLocation type="plasmid">
    <name>pYV</name>
</geneLocation>
<gene>
    <name type="primary">yscT</name>
    <name type="ordered locus">pYV0073</name>
</gene>
<sequence>MIADLIQRPLLTYTLLLPRFMACFVILPVLSKQLLGGVLLRNGIVCSLALYVYPAVANQPYIEVDAFTLMLLIGKEIILGLLIGFVATIPFWALESAGFIVDNQRGAAMASLLNPGLDSQTSPTGLLLTQTLITIFFSGGAFLSLLSALFHSYVNWPVASFFPAVSEQWVDFFYNQFSQILLIAAVLAAPLLIAMFLAEFGLALISRFAPSLNVFVLAMPIKSAIASLLLVIYCMQMMSHASKAMLLVMDPISLLIPVLEK</sequence>
<accession>P69985</accession>
<accession>P40299</accession>
<accession>Q663J3</accession>
<organism>
    <name type="scientific">Yersinia pseudotuberculosis serotype I (strain IP32953)</name>
    <dbReference type="NCBI Taxonomy" id="273123"/>
    <lineage>
        <taxon>Bacteria</taxon>
        <taxon>Pseudomonadati</taxon>
        <taxon>Pseudomonadota</taxon>
        <taxon>Gammaproteobacteria</taxon>
        <taxon>Enterobacterales</taxon>
        <taxon>Yersiniaceae</taxon>
        <taxon>Yersinia</taxon>
    </lineage>
</organism>
<keyword id="KW-1003">Cell membrane</keyword>
<keyword id="KW-0472">Membrane</keyword>
<keyword id="KW-0614">Plasmid</keyword>
<keyword id="KW-0653">Protein transport</keyword>
<keyword id="KW-0812">Transmembrane</keyword>
<keyword id="KW-1133">Transmembrane helix</keyword>
<keyword id="KW-0813">Transport</keyword>
<keyword id="KW-0843">Virulence</keyword>
<name>YSCT_YERPS</name>
<comment type="function">
    <text>Component of the yop secretion machinery.</text>
</comment>
<comment type="subcellular location">
    <subcellularLocation>
        <location evidence="2">Cell membrane</location>
        <topology evidence="2">Multi-pass membrane protein</topology>
    </subcellularLocation>
</comment>
<comment type="similarity">
    <text evidence="2">Belongs to the FliR/MopE/SpaR family.</text>
</comment>
<evidence type="ECO:0000255" key="1"/>
<evidence type="ECO:0000305" key="2"/>